<protein>
    <recommendedName>
        <fullName evidence="1">DNA ligase</fullName>
        <ecNumber evidence="1">6.5.1.2</ecNumber>
    </recommendedName>
    <alternativeName>
        <fullName evidence="1">Polydeoxyribonucleotide synthase [NAD(+)]</fullName>
    </alternativeName>
</protein>
<gene>
    <name evidence="1" type="primary">ligA</name>
    <name type="ordered locus">MUL_1933</name>
</gene>
<name>DNLJ_MYCUA</name>
<keyword id="KW-0227">DNA damage</keyword>
<keyword id="KW-0234">DNA repair</keyword>
<keyword id="KW-0235">DNA replication</keyword>
<keyword id="KW-0436">Ligase</keyword>
<keyword id="KW-0460">Magnesium</keyword>
<keyword id="KW-0464">Manganese</keyword>
<keyword id="KW-0479">Metal-binding</keyword>
<keyword id="KW-0520">NAD</keyword>
<keyword id="KW-0862">Zinc</keyword>
<comment type="function">
    <text evidence="1">DNA ligase that catalyzes the formation of phosphodiester linkages between 5'-phosphoryl and 3'-hydroxyl groups in double-stranded DNA using NAD as a coenzyme and as the energy source for the reaction. It is essential for DNA replication and repair of damaged DNA.</text>
</comment>
<comment type="catalytic activity">
    <reaction evidence="1">
        <text>NAD(+) + (deoxyribonucleotide)n-3'-hydroxyl + 5'-phospho-(deoxyribonucleotide)m = (deoxyribonucleotide)n+m + AMP + beta-nicotinamide D-nucleotide.</text>
        <dbReference type="EC" id="6.5.1.2"/>
    </reaction>
</comment>
<comment type="cofactor">
    <cofactor evidence="1">
        <name>Mg(2+)</name>
        <dbReference type="ChEBI" id="CHEBI:18420"/>
    </cofactor>
    <cofactor evidence="1">
        <name>Mn(2+)</name>
        <dbReference type="ChEBI" id="CHEBI:29035"/>
    </cofactor>
</comment>
<comment type="similarity">
    <text evidence="1">Belongs to the NAD-dependent DNA ligase family. LigA subfamily.</text>
</comment>
<organism>
    <name type="scientific">Mycobacterium ulcerans (strain Agy99)</name>
    <dbReference type="NCBI Taxonomy" id="362242"/>
    <lineage>
        <taxon>Bacteria</taxon>
        <taxon>Bacillati</taxon>
        <taxon>Actinomycetota</taxon>
        <taxon>Actinomycetes</taxon>
        <taxon>Mycobacteriales</taxon>
        <taxon>Mycobacteriaceae</taxon>
        <taxon>Mycobacterium</taxon>
        <taxon>Mycobacterium ulcerans group</taxon>
    </lineage>
</organism>
<dbReference type="EC" id="6.5.1.2" evidence="1"/>
<dbReference type="EMBL" id="CP000325">
    <property type="protein sequence ID" value="ABL04388.1"/>
    <property type="molecule type" value="Genomic_DNA"/>
</dbReference>
<dbReference type="SMR" id="A0PPW9"/>
<dbReference type="KEGG" id="mul:MUL_1933"/>
<dbReference type="eggNOG" id="COG0272">
    <property type="taxonomic scope" value="Bacteria"/>
</dbReference>
<dbReference type="HOGENOM" id="CLU_007764_2_1_11"/>
<dbReference type="Proteomes" id="UP000000765">
    <property type="component" value="Chromosome"/>
</dbReference>
<dbReference type="GO" id="GO:0005829">
    <property type="term" value="C:cytosol"/>
    <property type="evidence" value="ECO:0007669"/>
    <property type="project" value="TreeGrafter"/>
</dbReference>
<dbReference type="GO" id="GO:0003911">
    <property type="term" value="F:DNA ligase (NAD+) activity"/>
    <property type="evidence" value="ECO:0007669"/>
    <property type="project" value="UniProtKB-UniRule"/>
</dbReference>
<dbReference type="GO" id="GO:0046872">
    <property type="term" value="F:metal ion binding"/>
    <property type="evidence" value="ECO:0007669"/>
    <property type="project" value="UniProtKB-KW"/>
</dbReference>
<dbReference type="GO" id="GO:0006281">
    <property type="term" value="P:DNA repair"/>
    <property type="evidence" value="ECO:0007669"/>
    <property type="project" value="UniProtKB-KW"/>
</dbReference>
<dbReference type="GO" id="GO:0006260">
    <property type="term" value="P:DNA replication"/>
    <property type="evidence" value="ECO:0007669"/>
    <property type="project" value="UniProtKB-KW"/>
</dbReference>
<dbReference type="CDD" id="cd17748">
    <property type="entry name" value="BRCT_DNA_ligase_like"/>
    <property type="match status" value="1"/>
</dbReference>
<dbReference type="CDD" id="cd00114">
    <property type="entry name" value="LIGANc"/>
    <property type="match status" value="1"/>
</dbReference>
<dbReference type="FunFam" id="1.10.150.20:FF:000006">
    <property type="entry name" value="DNA ligase"/>
    <property type="match status" value="1"/>
</dbReference>
<dbReference type="FunFam" id="1.10.287.610:FF:000002">
    <property type="entry name" value="DNA ligase"/>
    <property type="match status" value="1"/>
</dbReference>
<dbReference type="FunFam" id="2.40.50.140:FF:000012">
    <property type="entry name" value="DNA ligase"/>
    <property type="match status" value="1"/>
</dbReference>
<dbReference type="FunFam" id="3.30.470.30:FF:000001">
    <property type="entry name" value="DNA ligase"/>
    <property type="match status" value="1"/>
</dbReference>
<dbReference type="FunFam" id="3.40.50.10190:FF:000054">
    <property type="entry name" value="DNA ligase"/>
    <property type="match status" value="1"/>
</dbReference>
<dbReference type="Gene3D" id="6.20.10.30">
    <property type="match status" value="1"/>
</dbReference>
<dbReference type="Gene3D" id="1.10.150.20">
    <property type="entry name" value="5' to 3' exonuclease, C-terminal subdomain"/>
    <property type="match status" value="2"/>
</dbReference>
<dbReference type="Gene3D" id="3.40.50.10190">
    <property type="entry name" value="BRCT domain"/>
    <property type="match status" value="1"/>
</dbReference>
<dbReference type="Gene3D" id="3.30.470.30">
    <property type="entry name" value="DNA ligase/mRNA capping enzyme"/>
    <property type="match status" value="1"/>
</dbReference>
<dbReference type="Gene3D" id="1.10.287.610">
    <property type="entry name" value="Helix hairpin bin"/>
    <property type="match status" value="1"/>
</dbReference>
<dbReference type="Gene3D" id="2.40.50.140">
    <property type="entry name" value="Nucleic acid-binding proteins"/>
    <property type="match status" value="1"/>
</dbReference>
<dbReference type="HAMAP" id="MF_01588">
    <property type="entry name" value="DNA_ligase_A"/>
    <property type="match status" value="1"/>
</dbReference>
<dbReference type="InterPro" id="IPR001357">
    <property type="entry name" value="BRCT_dom"/>
</dbReference>
<dbReference type="InterPro" id="IPR036420">
    <property type="entry name" value="BRCT_dom_sf"/>
</dbReference>
<dbReference type="InterPro" id="IPR041663">
    <property type="entry name" value="DisA/LigA_HHH"/>
</dbReference>
<dbReference type="InterPro" id="IPR001679">
    <property type="entry name" value="DNA_ligase"/>
</dbReference>
<dbReference type="InterPro" id="IPR018239">
    <property type="entry name" value="DNA_ligase_AS"/>
</dbReference>
<dbReference type="InterPro" id="IPR033136">
    <property type="entry name" value="DNA_ligase_CS"/>
</dbReference>
<dbReference type="InterPro" id="IPR013839">
    <property type="entry name" value="DNAligase_adenylation"/>
</dbReference>
<dbReference type="InterPro" id="IPR013840">
    <property type="entry name" value="DNAligase_N"/>
</dbReference>
<dbReference type="InterPro" id="IPR012340">
    <property type="entry name" value="NA-bd_OB-fold"/>
</dbReference>
<dbReference type="InterPro" id="IPR004150">
    <property type="entry name" value="NAD_DNA_ligase_OB"/>
</dbReference>
<dbReference type="InterPro" id="IPR010994">
    <property type="entry name" value="RuvA_2-like"/>
</dbReference>
<dbReference type="InterPro" id="IPR004149">
    <property type="entry name" value="Znf_DNAligase_C4"/>
</dbReference>
<dbReference type="NCBIfam" id="TIGR00575">
    <property type="entry name" value="dnlj"/>
    <property type="match status" value="1"/>
</dbReference>
<dbReference type="NCBIfam" id="NF005932">
    <property type="entry name" value="PRK07956.1"/>
    <property type="match status" value="1"/>
</dbReference>
<dbReference type="PANTHER" id="PTHR23389">
    <property type="entry name" value="CHROMOSOME TRANSMISSION FIDELITY FACTOR 18"/>
    <property type="match status" value="1"/>
</dbReference>
<dbReference type="PANTHER" id="PTHR23389:SF9">
    <property type="entry name" value="DNA LIGASE"/>
    <property type="match status" value="1"/>
</dbReference>
<dbReference type="Pfam" id="PF00533">
    <property type="entry name" value="BRCT"/>
    <property type="match status" value="1"/>
</dbReference>
<dbReference type="Pfam" id="PF01653">
    <property type="entry name" value="DNA_ligase_aden"/>
    <property type="match status" value="1"/>
</dbReference>
<dbReference type="Pfam" id="PF03120">
    <property type="entry name" value="DNA_ligase_OB"/>
    <property type="match status" value="1"/>
</dbReference>
<dbReference type="Pfam" id="PF03119">
    <property type="entry name" value="DNA_ligase_ZBD"/>
    <property type="match status" value="1"/>
</dbReference>
<dbReference type="Pfam" id="PF12826">
    <property type="entry name" value="HHH_2"/>
    <property type="match status" value="1"/>
</dbReference>
<dbReference type="Pfam" id="PF22745">
    <property type="entry name" value="Nlig-Ia"/>
    <property type="match status" value="1"/>
</dbReference>
<dbReference type="PIRSF" id="PIRSF001604">
    <property type="entry name" value="LigA"/>
    <property type="match status" value="1"/>
</dbReference>
<dbReference type="SMART" id="SM00292">
    <property type="entry name" value="BRCT"/>
    <property type="match status" value="1"/>
</dbReference>
<dbReference type="SMART" id="SM00532">
    <property type="entry name" value="LIGANc"/>
    <property type="match status" value="1"/>
</dbReference>
<dbReference type="SUPFAM" id="SSF52113">
    <property type="entry name" value="BRCT domain"/>
    <property type="match status" value="1"/>
</dbReference>
<dbReference type="SUPFAM" id="SSF56091">
    <property type="entry name" value="DNA ligase/mRNA capping enzyme, catalytic domain"/>
    <property type="match status" value="1"/>
</dbReference>
<dbReference type="SUPFAM" id="SSF50249">
    <property type="entry name" value="Nucleic acid-binding proteins"/>
    <property type="match status" value="1"/>
</dbReference>
<dbReference type="SUPFAM" id="SSF47781">
    <property type="entry name" value="RuvA domain 2-like"/>
    <property type="match status" value="1"/>
</dbReference>
<dbReference type="PROSITE" id="PS50172">
    <property type="entry name" value="BRCT"/>
    <property type="match status" value="1"/>
</dbReference>
<dbReference type="PROSITE" id="PS01055">
    <property type="entry name" value="DNA_LIGASE_N1"/>
    <property type="match status" value="1"/>
</dbReference>
<dbReference type="PROSITE" id="PS01056">
    <property type="entry name" value="DNA_LIGASE_N2"/>
    <property type="match status" value="1"/>
</dbReference>
<accession>A0PPW9</accession>
<evidence type="ECO:0000255" key="1">
    <source>
        <dbReference type="HAMAP-Rule" id="MF_01588"/>
    </source>
</evidence>
<reference key="1">
    <citation type="journal article" date="2007" name="Genome Res.">
        <title>Reductive evolution and niche adaptation inferred from the genome of Mycobacterium ulcerans, the causative agent of Buruli ulcer.</title>
        <authorList>
            <person name="Stinear T.P."/>
            <person name="Seemann T."/>
            <person name="Pidot S."/>
            <person name="Frigui W."/>
            <person name="Reysset G."/>
            <person name="Garnier T."/>
            <person name="Meurice G."/>
            <person name="Simon D."/>
            <person name="Bouchier C."/>
            <person name="Ma L."/>
            <person name="Tichit M."/>
            <person name="Porter J.L."/>
            <person name="Ryan J."/>
            <person name="Johnson P.D.R."/>
            <person name="Davies J.K."/>
            <person name="Jenkin G.A."/>
            <person name="Small P.L.C."/>
            <person name="Jones L.M."/>
            <person name="Tekaia F."/>
            <person name="Laval F."/>
            <person name="Daffe M."/>
            <person name="Parkhill J."/>
            <person name="Cole S.T."/>
        </authorList>
    </citation>
    <scope>NUCLEOTIDE SEQUENCE [LARGE SCALE GENOMIC DNA]</scope>
    <source>
        <strain>Agy99</strain>
    </source>
</reference>
<feature type="chain" id="PRO_0000313317" description="DNA ligase">
    <location>
        <begin position="1"/>
        <end position="683"/>
    </location>
</feature>
<feature type="domain" description="BRCT" evidence="1">
    <location>
        <begin position="595"/>
        <end position="683"/>
    </location>
</feature>
<feature type="active site" description="N6-AMP-lysine intermediate" evidence="1">
    <location>
        <position position="111"/>
    </location>
</feature>
<feature type="binding site" evidence="1">
    <location>
        <begin position="29"/>
        <end position="33"/>
    </location>
    <ligand>
        <name>NAD(+)</name>
        <dbReference type="ChEBI" id="CHEBI:57540"/>
    </ligand>
</feature>
<feature type="binding site" evidence="1">
    <location>
        <begin position="79"/>
        <end position="80"/>
    </location>
    <ligand>
        <name>NAD(+)</name>
        <dbReference type="ChEBI" id="CHEBI:57540"/>
    </ligand>
</feature>
<feature type="binding site" evidence="1">
    <location>
        <position position="109"/>
    </location>
    <ligand>
        <name>NAD(+)</name>
        <dbReference type="ChEBI" id="CHEBI:57540"/>
    </ligand>
</feature>
<feature type="binding site" evidence="1">
    <location>
        <position position="132"/>
    </location>
    <ligand>
        <name>NAD(+)</name>
        <dbReference type="ChEBI" id="CHEBI:57540"/>
    </ligand>
</feature>
<feature type="binding site" evidence="1">
    <location>
        <position position="172"/>
    </location>
    <ligand>
        <name>NAD(+)</name>
        <dbReference type="ChEBI" id="CHEBI:57540"/>
    </ligand>
</feature>
<feature type="binding site" evidence="1">
    <location>
        <position position="288"/>
    </location>
    <ligand>
        <name>NAD(+)</name>
        <dbReference type="ChEBI" id="CHEBI:57540"/>
    </ligand>
</feature>
<feature type="binding site" evidence="1">
    <location>
        <position position="312"/>
    </location>
    <ligand>
        <name>NAD(+)</name>
        <dbReference type="ChEBI" id="CHEBI:57540"/>
    </ligand>
</feature>
<feature type="binding site" evidence="1">
    <location>
        <position position="406"/>
    </location>
    <ligand>
        <name>Zn(2+)</name>
        <dbReference type="ChEBI" id="CHEBI:29105"/>
    </ligand>
</feature>
<feature type="binding site" evidence="1">
    <location>
        <position position="409"/>
    </location>
    <ligand>
        <name>Zn(2+)</name>
        <dbReference type="ChEBI" id="CHEBI:29105"/>
    </ligand>
</feature>
<feature type="binding site" evidence="1">
    <location>
        <position position="425"/>
    </location>
    <ligand>
        <name>Zn(2+)</name>
        <dbReference type="ChEBI" id="CHEBI:29105"/>
    </ligand>
</feature>
<feature type="binding site" evidence="1">
    <location>
        <position position="431"/>
    </location>
    <ligand>
        <name>Zn(2+)</name>
        <dbReference type="ChEBI" id="CHEBI:29105"/>
    </ligand>
</feature>
<proteinExistence type="inferred from homology"/>
<sequence length="683" mass="74625">MLRQWQELAEQVREHQFRYYVRDAPVITDAEFDELLRRLEALEEQYPELRTPDSPTQLVGGAGFATEFEPVEHLERMLSLDNAFNTEELTAWAGRIHADVGDSAAYLCELKIDGVALSLVYEGGRLTRASTRGDGRTGEDVTLNARTIEDVPERLSHSEDHRMPEVLEVRGEVFFRVADFQALNASLVEEGKAPFANPRNSAAGSLRQKDPAVTARRRLRMICHGLGHTEGFRPATLHQAYLALQAWGLPVSQHTTLVADLAEVQARIDYWGEHRHEVDHEIDGVVVKVDDVALQRRLGSTSRAPRWAIAYKYPPEEAQTKLLDIRVNVGRTGRVTPFAFMTPVKVAGSTVAQATLHNASEVKRKGVLIGDTVVIRKAGDVIPEVLGPVVDLRDGSEREFVMPTTCPECGTPLAPEKEGDADIRCPNTRSCPGQLRERVFHVSSRNALDIEMLGYEAGAALLSARVIGDEGDLFGLTEEELLRTDLFRTKAGDLSANGRRLLANLDKAKAAPLWRVLVALSIRHVGPTAARALATEFGSIDAIVAATTEQLAAVEGVGPTIASAVSEWFTVDWHREIVERWRAAGVRMADERDDSVPRTLAGVTVVVTGSLPGFSRDEAKEAIVTRGGKAAGSVSKKTSYVVAGDAPGSKYDKAVELGVPILDEDGFRKLLEQGPPAEAGEPT</sequence>